<name>DAPB_EXISA</name>
<gene>
    <name evidence="1" type="primary">dapB</name>
    <name type="ordered locus">EAT1b_2263</name>
</gene>
<organism>
    <name type="scientific">Exiguobacterium sp. (strain ATCC BAA-1283 / AT1b)</name>
    <dbReference type="NCBI Taxonomy" id="360911"/>
    <lineage>
        <taxon>Bacteria</taxon>
        <taxon>Bacillati</taxon>
        <taxon>Bacillota</taxon>
        <taxon>Bacilli</taxon>
        <taxon>Bacillales</taxon>
        <taxon>Bacillales Family XII. Incertae Sedis</taxon>
        <taxon>Exiguobacterium</taxon>
    </lineage>
</organism>
<dbReference type="EC" id="1.17.1.8" evidence="1"/>
<dbReference type="EMBL" id="CP001615">
    <property type="protein sequence ID" value="ACQ71185.1"/>
    <property type="molecule type" value="Genomic_DNA"/>
</dbReference>
<dbReference type="RefSeq" id="WP_015880744.1">
    <property type="nucleotide sequence ID" value="NC_012673.1"/>
</dbReference>
<dbReference type="SMR" id="C4L2D3"/>
<dbReference type="STRING" id="360911.EAT1b_2263"/>
<dbReference type="KEGG" id="eat:EAT1b_2263"/>
<dbReference type="eggNOG" id="COG0289">
    <property type="taxonomic scope" value="Bacteria"/>
</dbReference>
<dbReference type="HOGENOM" id="CLU_047479_2_2_9"/>
<dbReference type="OrthoDB" id="9790352at2"/>
<dbReference type="UniPathway" id="UPA00034">
    <property type="reaction ID" value="UER00018"/>
</dbReference>
<dbReference type="Proteomes" id="UP000000716">
    <property type="component" value="Chromosome"/>
</dbReference>
<dbReference type="GO" id="GO:0005829">
    <property type="term" value="C:cytosol"/>
    <property type="evidence" value="ECO:0007669"/>
    <property type="project" value="TreeGrafter"/>
</dbReference>
<dbReference type="GO" id="GO:0008839">
    <property type="term" value="F:4-hydroxy-tetrahydrodipicolinate reductase"/>
    <property type="evidence" value="ECO:0007669"/>
    <property type="project" value="UniProtKB-EC"/>
</dbReference>
<dbReference type="GO" id="GO:0051287">
    <property type="term" value="F:NAD binding"/>
    <property type="evidence" value="ECO:0007669"/>
    <property type="project" value="UniProtKB-UniRule"/>
</dbReference>
<dbReference type="GO" id="GO:0050661">
    <property type="term" value="F:NADP binding"/>
    <property type="evidence" value="ECO:0007669"/>
    <property type="project" value="UniProtKB-UniRule"/>
</dbReference>
<dbReference type="GO" id="GO:0016726">
    <property type="term" value="F:oxidoreductase activity, acting on CH or CH2 groups, NAD or NADP as acceptor"/>
    <property type="evidence" value="ECO:0007669"/>
    <property type="project" value="UniProtKB-UniRule"/>
</dbReference>
<dbReference type="GO" id="GO:0019877">
    <property type="term" value="P:diaminopimelate biosynthetic process"/>
    <property type="evidence" value="ECO:0007669"/>
    <property type="project" value="UniProtKB-UniRule"/>
</dbReference>
<dbReference type="GO" id="GO:0009089">
    <property type="term" value="P:lysine biosynthetic process via diaminopimelate"/>
    <property type="evidence" value="ECO:0007669"/>
    <property type="project" value="UniProtKB-UniRule"/>
</dbReference>
<dbReference type="CDD" id="cd02274">
    <property type="entry name" value="DHDPR_N"/>
    <property type="match status" value="1"/>
</dbReference>
<dbReference type="FunFam" id="3.30.360.10:FF:000009">
    <property type="entry name" value="4-hydroxy-tetrahydrodipicolinate reductase"/>
    <property type="match status" value="1"/>
</dbReference>
<dbReference type="Gene3D" id="3.30.360.10">
    <property type="entry name" value="Dihydrodipicolinate Reductase, domain 2"/>
    <property type="match status" value="1"/>
</dbReference>
<dbReference type="Gene3D" id="3.40.50.720">
    <property type="entry name" value="NAD(P)-binding Rossmann-like Domain"/>
    <property type="match status" value="1"/>
</dbReference>
<dbReference type="HAMAP" id="MF_00102">
    <property type="entry name" value="DapB"/>
    <property type="match status" value="1"/>
</dbReference>
<dbReference type="InterPro" id="IPR022663">
    <property type="entry name" value="DapB_C"/>
</dbReference>
<dbReference type="InterPro" id="IPR000846">
    <property type="entry name" value="DapB_N"/>
</dbReference>
<dbReference type="InterPro" id="IPR022664">
    <property type="entry name" value="DapB_N_CS"/>
</dbReference>
<dbReference type="InterPro" id="IPR023940">
    <property type="entry name" value="DHDPR_bac"/>
</dbReference>
<dbReference type="InterPro" id="IPR036291">
    <property type="entry name" value="NAD(P)-bd_dom_sf"/>
</dbReference>
<dbReference type="NCBIfam" id="TIGR00036">
    <property type="entry name" value="dapB"/>
    <property type="match status" value="1"/>
</dbReference>
<dbReference type="PANTHER" id="PTHR20836:SF7">
    <property type="entry name" value="4-HYDROXY-TETRAHYDRODIPICOLINATE REDUCTASE"/>
    <property type="match status" value="1"/>
</dbReference>
<dbReference type="PANTHER" id="PTHR20836">
    <property type="entry name" value="DIHYDRODIPICOLINATE REDUCTASE"/>
    <property type="match status" value="1"/>
</dbReference>
<dbReference type="Pfam" id="PF05173">
    <property type="entry name" value="DapB_C"/>
    <property type="match status" value="1"/>
</dbReference>
<dbReference type="Pfam" id="PF01113">
    <property type="entry name" value="DapB_N"/>
    <property type="match status" value="1"/>
</dbReference>
<dbReference type="PIRSF" id="PIRSF000161">
    <property type="entry name" value="DHPR"/>
    <property type="match status" value="1"/>
</dbReference>
<dbReference type="SUPFAM" id="SSF55347">
    <property type="entry name" value="Glyceraldehyde-3-phosphate dehydrogenase-like, C-terminal domain"/>
    <property type="match status" value="1"/>
</dbReference>
<dbReference type="SUPFAM" id="SSF51735">
    <property type="entry name" value="NAD(P)-binding Rossmann-fold domains"/>
    <property type="match status" value="1"/>
</dbReference>
<dbReference type="PROSITE" id="PS01298">
    <property type="entry name" value="DAPB"/>
    <property type="match status" value="1"/>
</dbReference>
<feature type="chain" id="PRO_1000202812" description="4-hydroxy-tetrahydrodipicolinate reductase">
    <location>
        <begin position="1"/>
        <end position="249"/>
    </location>
</feature>
<feature type="active site" description="Proton donor/acceptor" evidence="1">
    <location>
        <position position="133"/>
    </location>
</feature>
<feature type="active site" description="Proton donor" evidence="1">
    <location>
        <position position="137"/>
    </location>
</feature>
<feature type="binding site" evidence="1">
    <location>
        <begin position="77"/>
        <end position="79"/>
    </location>
    <ligand>
        <name>NAD(+)</name>
        <dbReference type="ChEBI" id="CHEBI:57540"/>
    </ligand>
</feature>
<feature type="binding site" evidence="1">
    <location>
        <begin position="101"/>
        <end position="104"/>
    </location>
    <ligand>
        <name>NAD(+)</name>
        <dbReference type="ChEBI" id="CHEBI:57540"/>
    </ligand>
</feature>
<feature type="binding site" evidence="1">
    <location>
        <position position="134"/>
    </location>
    <ligand>
        <name>(S)-2,3,4,5-tetrahydrodipicolinate</name>
        <dbReference type="ChEBI" id="CHEBI:16845"/>
    </ligand>
</feature>
<feature type="binding site" evidence="1">
    <location>
        <begin position="143"/>
        <end position="144"/>
    </location>
    <ligand>
        <name>(S)-2,3,4,5-tetrahydrodipicolinate</name>
        <dbReference type="ChEBI" id="CHEBI:16845"/>
    </ligand>
</feature>
<proteinExistence type="inferred from homology"/>
<comment type="function">
    <text evidence="1">Catalyzes the conversion of 4-hydroxy-tetrahydrodipicolinate (HTPA) to tetrahydrodipicolinate.</text>
</comment>
<comment type="catalytic activity">
    <reaction evidence="1">
        <text>(S)-2,3,4,5-tetrahydrodipicolinate + NAD(+) + H2O = (2S,4S)-4-hydroxy-2,3,4,5-tetrahydrodipicolinate + NADH + H(+)</text>
        <dbReference type="Rhea" id="RHEA:35323"/>
        <dbReference type="ChEBI" id="CHEBI:15377"/>
        <dbReference type="ChEBI" id="CHEBI:15378"/>
        <dbReference type="ChEBI" id="CHEBI:16845"/>
        <dbReference type="ChEBI" id="CHEBI:57540"/>
        <dbReference type="ChEBI" id="CHEBI:57945"/>
        <dbReference type="ChEBI" id="CHEBI:67139"/>
        <dbReference type="EC" id="1.17.1.8"/>
    </reaction>
</comment>
<comment type="catalytic activity">
    <reaction evidence="1">
        <text>(S)-2,3,4,5-tetrahydrodipicolinate + NADP(+) + H2O = (2S,4S)-4-hydroxy-2,3,4,5-tetrahydrodipicolinate + NADPH + H(+)</text>
        <dbReference type="Rhea" id="RHEA:35331"/>
        <dbReference type="ChEBI" id="CHEBI:15377"/>
        <dbReference type="ChEBI" id="CHEBI:15378"/>
        <dbReference type="ChEBI" id="CHEBI:16845"/>
        <dbReference type="ChEBI" id="CHEBI:57783"/>
        <dbReference type="ChEBI" id="CHEBI:58349"/>
        <dbReference type="ChEBI" id="CHEBI:67139"/>
        <dbReference type="EC" id="1.17.1.8"/>
    </reaction>
</comment>
<comment type="pathway">
    <text evidence="1">Amino-acid biosynthesis; L-lysine biosynthesis via DAP pathway; (S)-tetrahydrodipicolinate from L-aspartate: step 4/4.</text>
</comment>
<comment type="subcellular location">
    <subcellularLocation>
        <location evidence="1">Cytoplasm</location>
    </subcellularLocation>
</comment>
<comment type="similarity">
    <text evidence="1">Belongs to the DapB family.</text>
</comment>
<comment type="caution">
    <text evidence="2">Was originally thought to be a dihydrodipicolinate reductase (DHDPR), catalyzing the conversion of dihydrodipicolinate to tetrahydrodipicolinate. However, it was shown in E.coli that the substrate of the enzymatic reaction is not dihydrodipicolinate (DHDP) but in fact (2S,4S)-4-hydroxy-2,3,4,5-tetrahydrodipicolinic acid (HTPA), the product released by the DapA-catalyzed reaction.</text>
</comment>
<accession>C4L2D3</accession>
<sequence length="249" mass="27083">MNVLIHGFGAMGRIVEEVAHAQGVNVTAIVSPGSDEHTATLNEVDVPVDVVIDFSNPALLPDLLAFGRERNIPLVIATTGFTPEELAEIETASQEIPIFQSYNTSYGIALLKQLLDQLVPLTLGYDIEVIEAHHRKKVDAPSGTAELLARAIEAKRDVTPIYERTSRREARGAEELGMHSIRGGTIFGEHTVLFAGDDEMIELKHTALSKRVFANGALAAAATIIDRPAGLYNLSNLYEEATHVTHKRL</sequence>
<evidence type="ECO:0000255" key="1">
    <source>
        <dbReference type="HAMAP-Rule" id="MF_00102"/>
    </source>
</evidence>
<evidence type="ECO:0000305" key="2"/>
<reference key="1">
    <citation type="journal article" date="2011" name="J. Bacteriol.">
        <title>Complete genome sequence of the Thermophilic Bacterium Exiguobacterium sp. AT1b.</title>
        <authorList>
            <person name="Vishnivetskaya T.A."/>
            <person name="Lucas S."/>
            <person name="Copeland A."/>
            <person name="Lapidus A."/>
            <person name="Glavina del Rio T."/>
            <person name="Dalin E."/>
            <person name="Tice H."/>
            <person name="Bruce D.C."/>
            <person name="Goodwin L.A."/>
            <person name="Pitluck S."/>
            <person name="Saunders E."/>
            <person name="Brettin T."/>
            <person name="Detter C."/>
            <person name="Han C."/>
            <person name="Larimer F."/>
            <person name="Land M.L."/>
            <person name="Hauser L.J."/>
            <person name="Kyrpides N.C."/>
            <person name="Ovchinnikova G."/>
            <person name="Kathariou S."/>
            <person name="Ramaley R.F."/>
            <person name="Rodrigues D.F."/>
            <person name="Hendrix C."/>
            <person name="Richardson P."/>
            <person name="Tiedje J.M."/>
        </authorList>
    </citation>
    <scope>NUCLEOTIDE SEQUENCE [LARGE SCALE GENOMIC DNA]</scope>
    <source>
        <strain>ATCC BAA-1283 / AT1b</strain>
    </source>
</reference>
<keyword id="KW-0028">Amino-acid biosynthesis</keyword>
<keyword id="KW-0963">Cytoplasm</keyword>
<keyword id="KW-0220">Diaminopimelate biosynthesis</keyword>
<keyword id="KW-0457">Lysine biosynthesis</keyword>
<keyword id="KW-0520">NAD</keyword>
<keyword id="KW-0521">NADP</keyword>
<keyword id="KW-0560">Oxidoreductase</keyword>
<protein>
    <recommendedName>
        <fullName evidence="1">4-hydroxy-tetrahydrodipicolinate reductase</fullName>
        <shortName evidence="1">HTPA reductase</shortName>
        <ecNumber evidence="1">1.17.1.8</ecNumber>
    </recommendedName>
</protein>